<proteinExistence type="inferred from homology"/>
<evidence type="ECO:0000255" key="1">
    <source>
        <dbReference type="HAMAP-Rule" id="MF_00017"/>
    </source>
</evidence>
<sequence length="198" mass="21840">MYVRIVQDLIRELGKLPGIGPKSAQRIAFFILQNPSFDIDRLSETLQSVRKQVQFCKVCGNFSEEDECVICSDPRRDRGVICVVEEPKDVVAIEKTREFSGLYHVLGGAISPIDGVGPDDLNIRQLLQRLADGTITEVVLATDPNMEGEATASYIARVISAMRIRVSKLASGLPVGSDLEYADEITLGRALEGRQYIN</sequence>
<accession>Q83N83</accession>
<feature type="chain" id="PRO_0000190417" description="Recombination protein RecR">
    <location>
        <begin position="1"/>
        <end position="198"/>
    </location>
</feature>
<feature type="domain" description="Toprim" evidence="1">
    <location>
        <begin position="79"/>
        <end position="174"/>
    </location>
</feature>
<feature type="zinc finger region" description="C4-type" evidence="1">
    <location>
        <begin position="56"/>
        <end position="71"/>
    </location>
</feature>
<comment type="function">
    <text evidence="1">May play a role in DNA repair. It seems to be involved in an RecBC-independent recombinational process of DNA repair. It may act with RecF and RecO.</text>
</comment>
<comment type="similarity">
    <text evidence="1">Belongs to the RecR family.</text>
</comment>
<keyword id="KW-0227">DNA damage</keyword>
<keyword id="KW-0233">DNA recombination</keyword>
<keyword id="KW-0234">DNA repair</keyword>
<keyword id="KW-0479">Metal-binding</keyword>
<keyword id="KW-0862">Zinc</keyword>
<keyword id="KW-0863">Zinc-finger</keyword>
<protein>
    <recommendedName>
        <fullName evidence="1">Recombination protein RecR</fullName>
    </recommendedName>
</protein>
<reference key="1">
    <citation type="journal article" date="2003" name="Lancet">
        <title>Sequencing and analysis of the genome of the Whipple's disease bacterium Tropheryma whipplei.</title>
        <authorList>
            <person name="Bentley S.D."/>
            <person name="Maiwald M."/>
            <person name="Murphy L.D."/>
            <person name="Pallen M.J."/>
            <person name="Yeats C.A."/>
            <person name="Dover L.G."/>
            <person name="Norbertczak H.T."/>
            <person name="Besra G.S."/>
            <person name="Quail M.A."/>
            <person name="Harris D.E."/>
            <person name="von Herbay A."/>
            <person name="Goble A."/>
            <person name="Rutter S."/>
            <person name="Squares R."/>
            <person name="Squares S."/>
            <person name="Barrell B.G."/>
            <person name="Parkhill J."/>
            <person name="Relman D.A."/>
        </authorList>
    </citation>
    <scope>NUCLEOTIDE SEQUENCE [LARGE SCALE GENOMIC DNA]</scope>
    <source>
        <strain>TW08/27</strain>
    </source>
</reference>
<gene>
    <name evidence="1" type="primary">recR</name>
    <name type="ordered locus">TW726</name>
</gene>
<name>RECR_TROW8</name>
<dbReference type="EMBL" id="BX251412">
    <property type="protein sequence ID" value="CAD67385.1"/>
    <property type="molecule type" value="Genomic_DNA"/>
</dbReference>
<dbReference type="RefSeq" id="WP_011096663.1">
    <property type="nucleotide sequence ID" value="NC_004551.1"/>
</dbReference>
<dbReference type="SMR" id="Q83N83"/>
<dbReference type="GeneID" id="67388503"/>
<dbReference type="KEGG" id="tws:TW726"/>
<dbReference type="HOGENOM" id="CLU_060739_1_0_11"/>
<dbReference type="GO" id="GO:0003677">
    <property type="term" value="F:DNA binding"/>
    <property type="evidence" value="ECO:0007669"/>
    <property type="project" value="UniProtKB-UniRule"/>
</dbReference>
<dbReference type="GO" id="GO:0008270">
    <property type="term" value="F:zinc ion binding"/>
    <property type="evidence" value="ECO:0007669"/>
    <property type="project" value="UniProtKB-KW"/>
</dbReference>
<dbReference type="GO" id="GO:0006310">
    <property type="term" value="P:DNA recombination"/>
    <property type="evidence" value="ECO:0007669"/>
    <property type="project" value="UniProtKB-UniRule"/>
</dbReference>
<dbReference type="GO" id="GO:0006281">
    <property type="term" value="P:DNA repair"/>
    <property type="evidence" value="ECO:0007669"/>
    <property type="project" value="UniProtKB-UniRule"/>
</dbReference>
<dbReference type="CDD" id="cd01025">
    <property type="entry name" value="TOPRIM_recR"/>
    <property type="match status" value="1"/>
</dbReference>
<dbReference type="Gene3D" id="3.30.60.80">
    <property type="match status" value="1"/>
</dbReference>
<dbReference type="Gene3D" id="3.40.1360.10">
    <property type="match status" value="1"/>
</dbReference>
<dbReference type="Gene3D" id="6.10.250.240">
    <property type="match status" value="1"/>
</dbReference>
<dbReference type="Gene3D" id="1.10.8.420">
    <property type="entry name" value="RecR Domain 1"/>
    <property type="match status" value="1"/>
</dbReference>
<dbReference type="HAMAP" id="MF_00017">
    <property type="entry name" value="RecR"/>
    <property type="match status" value="1"/>
</dbReference>
<dbReference type="InterPro" id="IPR000093">
    <property type="entry name" value="DNA_Rcmb_RecR"/>
</dbReference>
<dbReference type="InterPro" id="IPR023627">
    <property type="entry name" value="Rcmb_RecR"/>
</dbReference>
<dbReference type="InterPro" id="IPR015967">
    <property type="entry name" value="Rcmb_RecR_Znf"/>
</dbReference>
<dbReference type="InterPro" id="IPR006171">
    <property type="entry name" value="TOPRIM_dom"/>
</dbReference>
<dbReference type="InterPro" id="IPR034137">
    <property type="entry name" value="TOPRIM_RecR"/>
</dbReference>
<dbReference type="NCBIfam" id="TIGR00615">
    <property type="entry name" value="recR"/>
    <property type="match status" value="1"/>
</dbReference>
<dbReference type="PANTHER" id="PTHR30446">
    <property type="entry name" value="RECOMBINATION PROTEIN RECR"/>
    <property type="match status" value="1"/>
</dbReference>
<dbReference type="PANTHER" id="PTHR30446:SF0">
    <property type="entry name" value="RECOMBINATION PROTEIN RECR"/>
    <property type="match status" value="1"/>
</dbReference>
<dbReference type="Pfam" id="PF21175">
    <property type="entry name" value="RecR_C"/>
    <property type="match status" value="1"/>
</dbReference>
<dbReference type="Pfam" id="PF21176">
    <property type="entry name" value="RecR_HhH"/>
    <property type="match status" value="1"/>
</dbReference>
<dbReference type="Pfam" id="PF02132">
    <property type="entry name" value="RecR_ZnF"/>
    <property type="match status" value="1"/>
</dbReference>
<dbReference type="Pfam" id="PF13662">
    <property type="entry name" value="Toprim_4"/>
    <property type="match status" value="1"/>
</dbReference>
<dbReference type="SMART" id="SM00493">
    <property type="entry name" value="TOPRIM"/>
    <property type="match status" value="1"/>
</dbReference>
<dbReference type="SUPFAM" id="SSF111304">
    <property type="entry name" value="Recombination protein RecR"/>
    <property type="match status" value="1"/>
</dbReference>
<dbReference type="PROSITE" id="PS01300">
    <property type="entry name" value="RECR"/>
    <property type="match status" value="1"/>
</dbReference>
<dbReference type="PROSITE" id="PS50880">
    <property type="entry name" value="TOPRIM"/>
    <property type="match status" value="1"/>
</dbReference>
<organism>
    <name type="scientific">Tropheryma whipplei (strain TW08/27)</name>
    <name type="common">Whipple's bacillus</name>
    <dbReference type="NCBI Taxonomy" id="218496"/>
    <lineage>
        <taxon>Bacteria</taxon>
        <taxon>Bacillati</taxon>
        <taxon>Actinomycetota</taxon>
        <taxon>Actinomycetes</taxon>
        <taxon>Micrococcales</taxon>
        <taxon>Tropherymataceae</taxon>
        <taxon>Tropheryma</taxon>
    </lineage>
</organism>